<comment type="subcellular location">
    <subcellularLocation>
        <location>Secreted</location>
    </subcellularLocation>
</comment>
<comment type="similarity">
    <text evidence="2">Belongs to the invertebrate defensin family. Type 1 subfamily.</text>
</comment>
<dbReference type="EMBL" id="AF013146">
    <property type="protein sequence ID" value="AAB66892.1"/>
    <property type="molecule type" value="mRNA"/>
</dbReference>
<dbReference type="EMBL" id="AF182163">
    <property type="protein sequence ID" value="AAD56535.1"/>
    <property type="molecule type" value="Genomic_DNA"/>
</dbReference>
<dbReference type="SMR" id="O16136"/>
<dbReference type="VEuPathDB" id="VectorBase:SCAU016912"/>
<dbReference type="Proteomes" id="UP000095300">
    <property type="component" value="Unassembled WGS sequence"/>
</dbReference>
<dbReference type="GO" id="GO:0005615">
    <property type="term" value="C:extracellular space"/>
    <property type="evidence" value="ECO:0007669"/>
    <property type="project" value="TreeGrafter"/>
</dbReference>
<dbReference type="GO" id="GO:0050830">
    <property type="term" value="P:defense response to Gram-positive bacterium"/>
    <property type="evidence" value="ECO:0007669"/>
    <property type="project" value="UniProtKB-ARBA"/>
</dbReference>
<dbReference type="GO" id="GO:0006959">
    <property type="term" value="P:humoral immune response"/>
    <property type="evidence" value="ECO:0007669"/>
    <property type="project" value="TreeGrafter"/>
</dbReference>
<dbReference type="GO" id="GO:0045087">
    <property type="term" value="P:innate immune response"/>
    <property type="evidence" value="ECO:0007669"/>
    <property type="project" value="UniProtKB-KW"/>
</dbReference>
<dbReference type="CDD" id="cd21806">
    <property type="entry name" value="DEFL_defensin-like"/>
    <property type="match status" value="1"/>
</dbReference>
<dbReference type="FunFam" id="3.30.30.10:FF:000005">
    <property type="entry name" value="Defensin"/>
    <property type="match status" value="1"/>
</dbReference>
<dbReference type="Gene3D" id="3.30.30.10">
    <property type="entry name" value="Knottin, scorpion toxin-like"/>
    <property type="match status" value="1"/>
</dbReference>
<dbReference type="InterPro" id="IPR001542">
    <property type="entry name" value="Defensin_invertebrate/fungal"/>
</dbReference>
<dbReference type="InterPro" id="IPR036574">
    <property type="entry name" value="Scorpion_toxin-like_sf"/>
</dbReference>
<dbReference type="PANTHER" id="PTHR13645">
    <property type="entry name" value="DEFENSIN"/>
    <property type="match status" value="1"/>
</dbReference>
<dbReference type="PANTHER" id="PTHR13645:SF0">
    <property type="entry name" value="DEFENSIN"/>
    <property type="match status" value="1"/>
</dbReference>
<dbReference type="Pfam" id="PF01097">
    <property type="entry name" value="Defensin_2"/>
    <property type="match status" value="1"/>
</dbReference>
<dbReference type="SUPFAM" id="SSF57095">
    <property type="entry name" value="Scorpion toxin-like"/>
    <property type="match status" value="1"/>
</dbReference>
<dbReference type="PROSITE" id="PS51378">
    <property type="entry name" value="INVERT_DEFENSINS"/>
    <property type="match status" value="1"/>
</dbReference>
<name>DEF1_STOCA</name>
<proteinExistence type="inferred from homology"/>
<protein>
    <recommendedName>
        <fullName>Defensin-1</fullName>
    </recommendedName>
</protein>
<accession>O16136</accession>
<evidence type="ECO:0000255" key="1"/>
<evidence type="ECO:0000255" key="2">
    <source>
        <dbReference type="PROSITE-ProRule" id="PRU00710"/>
    </source>
</evidence>
<feature type="signal peptide" evidence="1">
    <location>
        <begin position="1"/>
        <end position="23"/>
    </location>
</feature>
<feature type="propeptide" id="PRO_0000006750">
    <location>
        <begin position="24"/>
        <end status="unknown"/>
    </location>
</feature>
<feature type="chain" id="PRO_0000006751" description="Defensin-1">
    <location>
        <begin status="unknown"/>
        <end position="79"/>
    </location>
</feature>
<feature type="disulfide bond" evidence="2">
    <location>
        <begin position="42"/>
        <end position="69"/>
    </location>
</feature>
<feature type="disulfide bond" evidence="2">
    <location>
        <begin position="55"/>
        <end position="75"/>
    </location>
</feature>
<feature type="disulfide bond" evidence="2">
    <location>
        <begin position="59"/>
        <end position="77"/>
    </location>
</feature>
<sequence>MKFLNVVAIALLVVACLAVYSNAAPHEGVKEVAAAKPMGITCDLLSLWKVGHAACAAHCLVLGDVGGYCTKEGLCVCKE</sequence>
<keyword id="KW-0044">Antibiotic</keyword>
<keyword id="KW-0929">Antimicrobial</keyword>
<keyword id="KW-0211">Defensin</keyword>
<keyword id="KW-1015">Disulfide bond</keyword>
<keyword id="KW-0391">Immunity</keyword>
<keyword id="KW-0399">Innate immunity</keyword>
<keyword id="KW-0964">Secreted</keyword>
<keyword id="KW-0732">Signal</keyword>
<reference key="1">
    <citation type="journal article" date="1997" name="Proc. Natl. Acad. Sci. U.S.A.">
        <title>Midgut-specific immune molecules are produced by the blood-sucking insect Stomoxys calcitrans.</title>
        <authorList>
            <person name="Lehane M.J."/>
            <person name="Wu D."/>
            <person name="Lehane S.M."/>
        </authorList>
    </citation>
    <scope>NUCLEOTIDE SEQUENCE [MRNA]</scope>
    <source>
        <tissue>Midgut</tissue>
    </source>
</reference>
<reference key="2">
    <citation type="journal article" date="2001" name="Insect Mol. Biol.">
        <title>Regulation of midgut defensin production in the blood-sucking insect Stomoxys calcitrans.</title>
        <authorList>
            <person name="Munks R.J.L."/>
            <person name="Hamilton J.V."/>
            <person name="Lehane S.M."/>
            <person name="Lehane M.J."/>
        </authorList>
    </citation>
    <scope>NUCLEOTIDE SEQUENCE [GENOMIC DNA]</scope>
    <source>
        <tissue>Midgut</tissue>
    </source>
</reference>
<gene>
    <name type="primary">SMD1</name>
</gene>
<organism>
    <name type="scientific">Stomoxys calcitrans</name>
    <name type="common">Stable fly</name>
    <name type="synonym">Conops calcitrans</name>
    <dbReference type="NCBI Taxonomy" id="35570"/>
    <lineage>
        <taxon>Eukaryota</taxon>
        <taxon>Metazoa</taxon>
        <taxon>Ecdysozoa</taxon>
        <taxon>Arthropoda</taxon>
        <taxon>Hexapoda</taxon>
        <taxon>Insecta</taxon>
        <taxon>Pterygota</taxon>
        <taxon>Neoptera</taxon>
        <taxon>Endopterygota</taxon>
        <taxon>Diptera</taxon>
        <taxon>Brachycera</taxon>
        <taxon>Muscomorpha</taxon>
        <taxon>Muscoidea</taxon>
        <taxon>Muscidae</taxon>
        <taxon>Stomoxys</taxon>
    </lineage>
</organism>